<proteinExistence type="inferred from homology"/>
<feature type="chain" id="PRO_0000122268" description="Small ribosomal subunit protein eS8">
    <location>
        <begin position="1"/>
        <end position="133"/>
    </location>
</feature>
<feature type="region of interest" description="Disordered" evidence="2">
    <location>
        <begin position="1"/>
        <end position="34"/>
    </location>
</feature>
<gene>
    <name evidence="1" type="primary">rps8e</name>
    <name type="ordered locus">MK1545</name>
</gene>
<name>RS8E_METKA</name>
<accession>Q8TV55</accession>
<organism>
    <name type="scientific">Methanopyrus kandleri (strain AV19 / DSM 6324 / JCM 9639 / NBRC 100938)</name>
    <dbReference type="NCBI Taxonomy" id="190192"/>
    <lineage>
        <taxon>Archaea</taxon>
        <taxon>Methanobacteriati</taxon>
        <taxon>Methanobacteriota</taxon>
        <taxon>Methanomada group</taxon>
        <taxon>Methanopyri</taxon>
        <taxon>Methanopyrales</taxon>
        <taxon>Methanopyraceae</taxon>
        <taxon>Methanopyrus</taxon>
    </lineage>
</organism>
<evidence type="ECO:0000255" key="1">
    <source>
        <dbReference type="HAMAP-Rule" id="MF_00029"/>
    </source>
</evidence>
<evidence type="ECO:0000256" key="2">
    <source>
        <dbReference type="SAM" id="MobiDB-lite"/>
    </source>
</evidence>
<evidence type="ECO:0000305" key="3"/>
<protein>
    <recommendedName>
        <fullName evidence="1">Small ribosomal subunit protein eS8</fullName>
    </recommendedName>
    <alternativeName>
        <fullName evidence="3">30S ribosomal protein S8e</fullName>
    </alternativeName>
</protein>
<dbReference type="EMBL" id="AE009439">
    <property type="protein sequence ID" value="AAM02758.1"/>
    <property type="molecule type" value="Genomic_DNA"/>
</dbReference>
<dbReference type="RefSeq" id="WP_011019913.1">
    <property type="nucleotide sequence ID" value="NC_003551.1"/>
</dbReference>
<dbReference type="SMR" id="Q8TV55"/>
<dbReference type="FunCoup" id="Q8TV55">
    <property type="interactions" value="127"/>
</dbReference>
<dbReference type="STRING" id="190192.MK1545"/>
<dbReference type="PaxDb" id="190192-MK1545"/>
<dbReference type="EnsemblBacteria" id="AAM02758">
    <property type="protein sequence ID" value="AAM02758"/>
    <property type="gene ID" value="MK1545"/>
</dbReference>
<dbReference type="GeneID" id="1478140"/>
<dbReference type="KEGG" id="mka:MK1545"/>
<dbReference type="PATRIC" id="fig|190192.8.peg.1706"/>
<dbReference type="HOGENOM" id="CLU_080597_2_1_2"/>
<dbReference type="InParanoid" id="Q8TV55"/>
<dbReference type="OrthoDB" id="372305at2157"/>
<dbReference type="Proteomes" id="UP000001826">
    <property type="component" value="Chromosome"/>
</dbReference>
<dbReference type="GO" id="GO:1990904">
    <property type="term" value="C:ribonucleoprotein complex"/>
    <property type="evidence" value="ECO:0007669"/>
    <property type="project" value="UniProtKB-KW"/>
</dbReference>
<dbReference type="GO" id="GO:0005840">
    <property type="term" value="C:ribosome"/>
    <property type="evidence" value="ECO:0007669"/>
    <property type="project" value="UniProtKB-KW"/>
</dbReference>
<dbReference type="GO" id="GO:0003735">
    <property type="term" value="F:structural constituent of ribosome"/>
    <property type="evidence" value="ECO:0007669"/>
    <property type="project" value="InterPro"/>
</dbReference>
<dbReference type="GO" id="GO:0006412">
    <property type="term" value="P:translation"/>
    <property type="evidence" value="ECO:0007669"/>
    <property type="project" value="UniProtKB-UniRule"/>
</dbReference>
<dbReference type="CDD" id="cd11382">
    <property type="entry name" value="Ribosomal_S8e"/>
    <property type="match status" value="1"/>
</dbReference>
<dbReference type="Gene3D" id="2.40.10.310">
    <property type="match status" value="1"/>
</dbReference>
<dbReference type="HAMAP" id="MF_00029">
    <property type="entry name" value="Ribosomal_eS8"/>
    <property type="match status" value="1"/>
</dbReference>
<dbReference type="InterPro" id="IPR001047">
    <property type="entry name" value="Ribosomal_eS8"/>
</dbReference>
<dbReference type="InterPro" id="IPR018283">
    <property type="entry name" value="Ribosomal_eS8_CS"/>
</dbReference>
<dbReference type="InterPro" id="IPR020919">
    <property type="entry name" value="Ribosomal_protein_eS8_arc"/>
</dbReference>
<dbReference type="InterPro" id="IPR022309">
    <property type="entry name" value="Ribosomal_Se8/biogenesis_NSA2"/>
</dbReference>
<dbReference type="NCBIfam" id="TIGR00307">
    <property type="entry name" value="eS8"/>
    <property type="match status" value="1"/>
</dbReference>
<dbReference type="Pfam" id="PF01201">
    <property type="entry name" value="Ribosomal_S8e"/>
    <property type="match status" value="1"/>
</dbReference>
<dbReference type="PROSITE" id="PS01193">
    <property type="entry name" value="RIBOSOMAL_S8E"/>
    <property type="match status" value="1"/>
</dbReference>
<comment type="subunit">
    <text evidence="1">Part of the 30S ribosomal subunit.</text>
</comment>
<comment type="similarity">
    <text evidence="1">Belongs to the eukaryotic ribosomal protein eS8 family.</text>
</comment>
<reference key="1">
    <citation type="journal article" date="2002" name="Proc. Natl. Acad. Sci. U.S.A.">
        <title>The complete genome of hyperthermophile Methanopyrus kandleri AV19 and monophyly of archaeal methanogens.</title>
        <authorList>
            <person name="Slesarev A.I."/>
            <person name="Mezhevaya K.V."/>
            <person name="Makarova K.S."/>
            <person name="Polushin N.N."/>
            <person name="Shcherbinina O.V."/>
            <person name="Shakhova V.V."/>
            <person name="Belova G.I."/>
            <person name="Aravind L."/>
            <person name="Natale D.A."/>
            <person name="Rogozin I.B."/>
            <person name="Tatusov R.L."/>
            <person name="Wolf Y.I."/>
            <person name="Stetter K.O."/>
            <person name="Malykh A.G."/>
            <person name="Koonin E.V."/>
            <person name="Kozyavkin S.A."/>
        </authorList>
    </citation>
    <scope>NUCLEOTIDE SEQUENCE [LARGE SCALE GENOMIC DNA]</scope>
    <source>
        <strain>AV19 / DSM 6324 / JCM 9639 / NBRC 100938</strain>
    </source>
</reference>
<sequence length="133" mass="14876">MGVWHGRSLRKPTGGRIRPHRKKRKFEMGNPPTETLVGEERKLKERRGMGGNVKKGLKFATHANVADPETGEVKCVRIEEVVKNPASQYYERHGVITKGAIIRTEIGLAKVTNRPGQEPVVNAVLIKEEEEEG</sequence>
<keyword id="KW-1185">Reference proteome</keyword>
<keyword id="KW-0687">Ribonucleoprotein</keyword>
<keyword id="KW-0689">Ribosomal protein</keyword>